<protein>
    <recommendedName>
        <fullName>NADH-ubiquinone oxidoreductase chain 4L</fullName>
        <ecNumber>7.1.1.2</ecNumber>
    </recommendedName>
    <alternativeName>
        <fullName>NADH dehydrogenase subunit 4L</fullName>
    </alternativeName>
</protein>
<reference key="1">
    <citation type="journal article" date="1999" name="J. Mol. Evol.">
        <title>Phylogenetic studies of complete mitochondrial DNA molecules place cartilaginous fishes within the tree of bony fishes.</title>
        <authorList>
            <person name="Rasmussen A.S."/>
            <person name="Arnason U."/>
        </authorList>
    </citation>
    <scope>NUCLEOTIDE SEQUENCE [GENOMIC DNA]</scope>
</reference>
<feature type="chain" id="PRO_0000118492" description="NADH-ubiquinone oxidoreductase chain 4L">
    <location>
        <begin position="1"/>
        <end position="98"/>
    </location>
</feature>
<feature type="transmembrane region" description="Helical" evidence="3">
    <location>
        <begin position="1"/>
        <end position="21"/>
    </location>
</feature>
<feature type="transmembrane region" description="Helical" evidence="3">
    <location>
        <begin position="26"/>
        <end position="46"/>
    </location>
</feature>
<feature type="transmembrane region" description="Helical" evidence="3">
    <location>
        <begin position="61"/>
        <end position="81"/>
    </location>
</feature>
<comment type="function">
    <text evidence="2">Core subunit of the mitochondrial membrane respiratory chain NADH dehydrogenase (Complex I) which catalyzes electron transfer from NADH through the respiratory chain, using ubiquinone as an electron acceptor. Part of the enzyme membrane arm which is embedded in the lipid bilayer and involved in proton translocation.</text>
</comment>
<comment type="catalytic activity">
    <reaction evidence="2">
        <text>a ubiquinone + NADH + 5 H(+)(in) = a ubiquinol + NAD(+) + 4 H(+)(out)</text>
        <dbReference type="Rhea" id="RHEA:29091"/>
        <dbReference type="Rhea" id="RHEA-COMP:9565"/>
        <dbReference type="Rhea" id="RHEA-COMP:9566"/>
        <dbReference type="ChEBI" id="CHEBI:15378"/>
        <dbReference type="ChEBI" id="CHEBI:16389"/>
        <dbReference type="ChEBI" id="CHEBI:17976"/>
        <dbReference type="ChEBI" id="CHEBI:57540"/>
        <dbReference type="ChEBI" id="CHEBI:57945"/>
        <dbReference type="EC" id="7.1.1.2"/>
    </reaction>
    <physiologicalReaction direction="left-to-right" evidence="2">
        <dbReference type="Rhea" id="RHEA:29092"/>
    </physiologicalReaction>
</comment>
<comment type="subcellular location">
    <subcellularLocation>
        <location evidence="1">Mitochondrion membrane</location>
        <topology evidence="1">Multi-pass membrane protein</topology>
    </subcellularLocation>
</comment>
<comment type="similarity">
    <text evidence="4">Belongs to the complex I subunit 4L family.</text>
</comment>
<proteinExistence type="inferred from homology"/>
<organism>
    <name type="scientific">Squalus acanthias</name>
    <name type="common">Spiny dogfish</name>
    <dbReference type="NCBI Taxonomy" id="7797"/>
    <lineage>
        <taxon>Eukaryota</taxon>
        <taxon>Metazoa</taxon>
        <taxon>Chordata</taxon>
        <taxon>Craniata</taxon>
        <taxon>Vertebrata</taxon>
        <taxon>Chondrichthyes</taxon>
        <taxon>Elasmobranchii</taxon>
        <taxon>Squalomorphii</taxon>
        <taxon>Squaliformes</taxon>
        <taxon>Squalidae</taxon>
        <taxon>Squalus</taxon>
    </lineage>
</organism>
<sequence>MSPVYFSFSSAFILGLMGLAFNRSHLLSALLCLEGMMLSLFIAIALWSMTLNSTSCSITPMILLTFSACEASAGLALLVAATRTHGSDHLQNLNLLQC</sequence>
<gene>
    <name type="primary">MT-ND4L</name>
    <name type="synonym">MTND4L</name>
    <name type="synonym">NADH4L</name>
    <name type="synonym">ND4L</name>
</gene>
<dbReference type="EC" id="7.1.1.2"/>
<dbReference type="EMBL" id="Y18134">
    <property type="protein sequence ID" value="CAA77057.1"/>
    <property type="molecule type" value="Genomic_DNA"/>
</dbReference>
<dbReference type="PIR" id="T11542">
    <property type="entry name" value="T11542"/>
</dbReference>
<dbReference type="RefSeq" id="NP_008531.1">
    <property type="nucleotide sequence ID" value="NC_002012.1"/>
</dbReference>
<dbReference type="SMR" id="Q9ZZ46"/>
<dbReference type="GeneID" id="808381"/>
<dbReference type="CTD" id="4539"/>
<dbReference type="GO" id="GO:0031966">
    <property type="term" value="C:mitochondrial membrane"/>
    <property type="evidence" value="ECO:0007669"/>
    <property type="project" value="UniProtKB-SubCell"/>
</dbReference>
<dbReference type="GO" id="GO:0045271">
    <property type="term" value="C:respiratory chain complex I"/>
    <property type="evidence" value="ECO:0000250"/>
    <property type="project" value="UniProtKB"/>
</dbReference>
<dbReference type="GO" id="GO:0008137">
    <property type="term" value="F:NADH dehydrogenase (ubiquinone) activity"/>
    <property type="evidence" value="ECO:0000250"/>
    <property type="project" value="UniProtKB"/>
</dbReference>
<dbReference type="GO" id="GO:0042773">
    <property type="term" value="P:ATP synthesis coupled electron transport"/>
    <property type="evidence" value="ECO:0007669"/>
    <property type="project" value="InterPro"/>
</dbReference>
<dbReference type="FunFam" id="1.10.287.3510:FF:000002">
    <property type="entry name" value="NADH-ubiquinone oxidoreductase chain 4L"/>
    <property type="match status" value="1"/>
</dbReference>
<dbReference type="Gene3D" id="1.10.287.3510">
    <property type="match status" value="1"/>
</dbReference>
<dbReference type="InterPro" id="IPR001133">
    <property type="entry name" value="NADH_UbQ_OxRdtase_chain4L/K"/>
</dbReference>
<dbReference type="InterPro" id="IPR039428">
    <property type="entry name" value="NUOK/Mnh_C1-like"/>
</dbReference>
<dbReference type="PANTHER" id="PTHR11434:SF0">
    <property type="entry name" value="NADH-UBIQUINONE OXIDOREDUCTASE CHAIN 4L"/>
    <property type="match status" value="1"/>
</dbReference>
<dbReference type="PANTHER" id="PTHR11434">
    <property type="entry name" value="NADH-UBIQUINONE OXIDOREDUCTASE SUBUNIT ND4L"/>
    <property type="match status" value="1"/>
</dbReference>
<dbReference type="Pfam" id="PF00420">
    <property type="entry name" value="Oxidored_q2"/>
    <property type="match status" value="1"/>
</dbReference>
<keyword id="KW-0249">Electron transport</keyword>
<keyword id="KW-0472">Membrane</keyword>
<keyword id="KW-0496">Mitochondrion</keyword>
<keyword id="KW-0520">NAD</keyword>
<keyword id="KW-0679">Respiratory chain</keyword>
<keyword id="KW-1278">Translocase</keyword>
<keyword id="KW-0812">Transmembrane</keyword>
<keyword id="KW-1133">Transmembrane helix</keyword>
<keyword id="KW-0813">Transport</keyword>
<keyword id="KW-0830">Ubiquinone</keyword>
<evidence type="ECO:0000250" key="1"/>
<evidence type="ECO:0000250" key="2">
    <source>
        <dbReference type="UniProtKB" id="P03901"/>
    </source>
</evidence>
<evidence type="ECO:0000255" key="3"/>
<evidence type="ECO:0000305" key="4"/>
<geneLocation type="mitochondrion"/>
<name>NU4LM_SQUAC</name>
<accession>Q9ZZ46</accession>